<dbReference type="EMBL" id="DQ067445">
    <property type="protein sequence ID" value="AAY68032.1"/>
    <property type="molecule type" value="mRNA"/>
</dbReference>
<dbReference type="EMBL" id="AK087669">
    <property type="protein sequence ID" value="BAC39962.1"/>
    <property type="molecule type" value="mRNA"/>
</dbReference>
<dbReference type="EMBL" id="AC161593">
    <property type="status" value="NOT_ANNOTATED_CDS"/>
    <property type="molecule type" value="Genomic_DNA"/>
</dbReference>
<dbReference type="EMBL" id="BC099378">
    <property type="protein sequence ID" value="AAH99378.1"/>
    <property type="molecule type" value="mRNA"/>
</dbReference>
<dbReference type="CCDS" id="CCDS23553.1">
    <molecule id="L7N1X6-1"/>
</dbReference>
<dbReference type="RefSeq" id="NP_950201.2">
    <molecule id="L7N1X6-1"/>
    <property type="nucleotide sequence ID" value="NM_199036.2"/>
</dbReference>
<dbReference type="RefSeq" id="XP_006512232.1">
    <molecule id="L7N1X6-2"/>
    <property type="nucleotide sequence ID" value="XM_006512169.2"/>
</dbReference>
<dbReference type="SMR" id="L7N1X6"/>
<dbReference type="FunCoup" id="L7N1X6">
    <property type="interactions" value="9"/>
</dbReference>
<dbReference type="STRING" id="10090.ENSMUSP00000058175"/>
<dbReference type="PaxDb" id="10090-ENSMUSP00000058175"/>
<dbReference type="DNASU" id="382105"/>
<dbReference type="Ensembl" id="ENSMUST00000056745.12">
    <molecule id="L7N1X6-1"/>
    <property type="protein sequence ID" value="ENSMUSP00000058175.7"/>
    <property type="gene ID" value="ENSMUSG00000074060.11"/>
</dbReference>
<dbReference type="Ensembl" id="ENSMUST00000198397.5">
    <molecule id="L7N1X6-2"/>
    <property type="protein sequence ID" value="ENSMUSP00000143385.2"/>
    <property type="gene ID" value="ENSMUSG00000074060.11"/>
</dbReference>
<dbReference type="GeneID" id="382105"/>
<dbReference type="KEGG" id="mmu:382105"/>
<dbReference type="UCSC" id="uc009rsl.1">
    <molecule id="L7N1X6-1"/>
    <property type="organism name" value="mouse"/>
</dbReference>
<dbReference type="UCSC" id="uc012hbe.1">
    <property type="organism name" value="mouse"/>
</dbReference>
<dbReference type="AGR" id="MGI:3505701"/>
<dbReference type="CTD" id="382105"/>
<dbReference type="MGI" id="MGI:3505701">
    <property type="gene designation" value="Fbxw15"/>
</dbReference>
<dbReference type="VEuPathDB" id="HostDB:ENSMUSG00000074060"/>
<dbReference type="eggNOG" id="ENOG502QT73">
    <property type="taxonomic scope" value="Eukaryota"/>
</dbReference>
<dbReference type="GeneTree" id="ENSGT00940000162557"/>
<dbReference type="HOGENOM" id="CLU_046549_1_0_1"/>
<dbReference type="InParanoid" id="L7N1X6"/>
<dbReference type="OrthoDB" id="63265at2759"/>
<dbReference type="PhylomeDB" id="L7N1X6"/>
<dbReference type="UniPathway" id="UPA00143"/>
<dbReference type="BioGRID-ORCS" id="382105">
    <property type="hits" value="2 hits in 77 CRISPR screens"/>
</dbReference>
<dbReference type="ChiTaRS" id="Fbxw15">
    <property type="organism name" value="mouse"/>
</dbReference>
<dbReference type="PRO" id="PR:L7N1X6"/>
<dbReference type="Proteomes" id="UP000000589">
    <property type="component" value="Chromosome 9"/>
</dbReference>
<dbReference type="RNAct" id="L7N1X6">
    <property type="molecule type" value="protein"/>
</dbReference>
<dbReference type="Bgee" id="ENSMUSG00000074060">
    <property type="expression patterns" value="Expressed in primary oocyte and 16 other cell types or tissues"/>
</dbReference>
<dbReference type="ExpressionAtlas" id="L7N1X6">
    <property type="expression patterns" value="baseline and differential"/>
</dbReference>
<dbReference type="GO" id="GO:0005737">
    <property type="term" value="C:cytoplasm"/>
    <property type="evidence" value="ECO:0000314"/>
    <property type="project" value="MGI"/>
</dbReference>
<dbReference type="GO" id="GO:0005829">
    <property type="term" value="C:cytosol"/>
    <property type="evidence" value="ECO:0007669"/>
    <property type="project" value="UniProtKB-SubCell"/>
</dbReference>
<dbReference type="GO" id="GO:0005783">
    <property type="term" value="C:endoplasmic reticulum"/>
    <property type="evidence" value="ECO:0000314"/>
    <property type="project" value="MGI"/>
</dbReference>
<dbReference type="GO" id="GO:0005634">
    <property type="term" value="C:nucleus"/>
    <property type="evidence" value="ECO:0007669"/>
    <property type="project" value="UniProtKB-SubCell"/>
</dbReference>
<dbReference type="GO" id="GO:0016567">
    <property type="term" value="P:protein ubiquitination"/>
    <property type="evidence" value="ECO:0007669"/>
    <property type="project" value="UniProtKB-UniPathway"/>
</dbReference>
<dbReference type="CDD" id="cd22137">
    <property type="entry name" value="F-box_FBXW12"/>
    <property type="match status" value="1"/>
</dbReference>
<dbReference type="FunFam" id="2.130.10.10:FF:002594">
    <property type="entry name" value="F-box/WD repeat-containing protein 12"/>
    <property type="match status" value="1"/>
</dbReference>
<dbReference type="Gene3D" id="1.20.1280.50">
    <property type="match status" value="1"/>
</dbReference>
<dbReference type="Gene3D" id="2.130.10.10">
    <property type="entry name" value="YVTN repeat-like/Quinoprotein amine dehydrogenase"/>
    <property type="match status" value="1"/>
</dbReference>
<dbReference type="InterPro" id="IPR036047">
    <property type="entry name" value="F-box-like_dom_sf"/>
</dbReference>
<dbReference type="InterPro" id="IPR001810">
    <property type="entry name" value="F-box_dom"/>
</dbReference>
<dbReference type="InterPro" id="IPR052121">
    <property type="entry name" value="F-box_SCF_Substrate_Recog"/>
</dbReference>
<dbReference type="InterPro" id="IPR015943">
    <property type="entry name" value="WD40/YVTN_repeat-like_dom_sf"/>
</dbReference>
<dbReference type="InterPro" id="IPR036322">
    <property type="entry name" value="WD40_repeat_dom_sf"/>
</dbReference>
<dbReference type="PANTHER" id="PTHR46550:SF2">
    <property type="entry name" value="EXPRESSED SEQUENCE C85627-RELATED"/>
    <property type="match status" value="1"/>
</dbReference>
<dbReference type="PANTHER" id="PTHR46550">
    <property type="entry name" value="F-BOX ONLY PROTEIN 3"/>
    <property type="match status" value="1"/>
</dbReference>
<dbReference type="Pfam" id="PF12937">
    <property type="entry name" value="F-box-like"/>
    <property type="match status" value="1"/>
</dbReference>
<dbReference type="SMART" id="SM00256">
    <property type="entry name" value="FBOX"/>
    <property type="match status" value="1"/>
</dbReference>
<dbReference type="SUPFAM" id="SSF81383">
    <property type="entry name" value="F-box domain"/>
    <property type="match status" value="1"/>
</dbReference>
<dbReference type="SUPFAM" id="SSF50978">
    <property type="entry name" value="WD40 repeat-like"/>
    <property type="match status" value="1"/>
</dbReference>
<dbReference type="PROSITE" id="PS50181">
    <property type="entry name" value="FBOX"/>
    <property type="match status" value="1"/>
</dbReference>
<sequence length="466" mass="53586">MAIHLPCLPMMKILSYLDAYSLLQAAQVNKDWNELASSDVLWRKLCQKRWLYCDMDTLQLQGKETWKQFFIDRIWQERAKFRAKAKDFTYKEIPLMCGLFGYACYISGCGLTRKGQDKSVVCMVNSKNTISTWDVHKSVITWKSPEQPASIKLLTTLPEMHIAVTVDIQSTIKLWDCHNREALATNNLKSPCKSLKAVFTKDGPIVLIGDTLGNIHIFRIPDLYLISTVNVLPYGFDGIYCSPQKKWVLLSKKHPHILPKVFYMSSFLRTSEFSAPVSTVLKLSLYERVFWTPRREDRITLMSRSGFPQVKMFETYDIKLEEFGNKRIVKGKLIASFELQCHKVNPQRFGVSDKNVIVCSTESSLLLFDINGLRLKTFQYCPEMIVKLSVDPLHVIVICNTGSMDVYAWEERSLLLRKCYRLHIERPLPLYGFIYKAACDDVSIIQLITDELSLSSLTSYALNICS</sequence>
<gene>
    <name evidence="11" type="primary">Fbxw15</name>
    <name evidence="6 11" type="synonym">Fbxo12J</name>
</gene>
<accession>L7N1X6</accession>
<accession>Q4FZL6</accession>
<accession>Q4PLJ2</accession>
<accession>Q8BI39</accession>
<feature type="chain" id="PRO_0000442736" description="F-box/WD repeat-containing protein 15">
    <location>
        <begin position="1"/>
        <end position="466"/>
    </location>
</feature>
<feature type="domain" description="F-box" evidence="2">
    <location>
        <begin position="1"/>
        <end position="45"/>
    </location>
</feature>
<feature type="repeat" description="WD 1" evidence="1">
    <location>
        <begin position="101"/>
        <end position="143"/>
    </location>
</feature>
<feature type="repeat" description="WD 2" evidence="1">
    <location>
        <begin position="146"/>
        <end position="185"/>
    </location>
</feature>
<feature type="repeat" description="WD 3" evidence="1">
    <location>
        <begin position="187"/>
        <end position="228"/>
    </location>
</feature>
<feature type="repeat" description="WD 4" evidence="1">
    <location>
        <begin position="339"/>
        <end position="379"/>
    </location>
</feature>
<feature type="repeat" description="WD 5" evidence="1">
    <location>
        <begin position="381"/>
        <end position="419"/>
    </location>
</feature>
<feature type="splice variant" id="VSP_059276" description="In isoform 2." evidence="3">
    <location>
        <begin position="208"/>
        <end position="390"/>
    </location>
</feature>
<feature type="sequence conflict" description="In Ref. 1; AAY68032." evidence="7" ref="1">
    <original>V</original>
    <variation>D</variation>
    <location>
        <position position="229"/>
    </location>
</feature>
<feature type="sequence conflict" description="In Ref. 2; BAC39962." evidence="7" ref="2">
    <original>L</original>
    <variation>W</variation>
    <location>
        <position position="258"/>
    </location>
</feature>
<keyword id="KW-0025">Alternative splicing</keyword>
<keyword id="KW-0963">Cytoplasm</keyword>
<keyword id="KW-0256">Endoplasmic reticulum</keyword>
<keyword id="KW-0539">Nucleus</keyword>
<keyword id="KW-1185">Reference proteome</keyword>
<keyword id="KW-0677">Repeat</keyword>
<keyword id="KW-0833">Ubl conjugation pathway</keyword>
<keyword id="KW-0853">WD repeat</keyword>
<organism evidence="12">
    <name type="scientific">Mus musculus</name>
    <name type="common">Mouse</name>
    <dbReference type="NCBI Taxonomy" id="10090"/>
    <lineage>
        <taxon>Eukaryota</taxon>
        <taxon>Metazoa</taxon>
        <taxon>Chordata</taxon>
        <taxon>Craniata</taxon>
        <taxon>Vertebrata</taxon>
        <taxon>Euteleostomi</taxon>
        <taxon>Mammalia</taxon>
        <taxon>Eutheria</taxon>
        <taxon>Euarchontoglires</taxon>
        <taxon>Glires</taxon>
        <taxon>Rodentia</taxon>
        <taxon>Myomorpha</taxon>
        <taxon>Muroidea</taxon>
        <taxon>Muridae</taxon>
        <taxon>Murinae</taxon>
        <taxon>Mus</taxon>
        <taxon>Mus</taxon>
    </lineage>
</organism>
<reference evidence="9" key="1">
    <citation type="journal article" date="2008" name="Biol. Reprod.">
        <title>Fbxw15/Fbxo12J is an F-box protein-encoding gene selectively expressed in oocytes of the mouse ovary.</title>
        <authorList>
            <person name="De La Chesnaye E."/>
            <person name="Kerr B."/>
            <person name="Paredes A."/>
            <person name="Merchant-Larios H."/>
            <person name="Mendez J.P."/>
            <person name="Ojeda S.R."/>
        </authorList>
    </citation>
    <scope>NUCLEOTIDE SEQUENCE [MRNA] (ISOFORM 1)</scope>
    <scope>SUBCELLULAR LOCATION</scope>
    <scope>TISSUE SPECIFICITY</scope>
    <scope>DEVELOPMENTAL STAGE</scope>
    <source>
        <strain evidence="9">C57BL/6J</strain>
    </source>
</reference>
<reference evidence="10" key="2">
    <citation type="journal article" date="2005" name="Science">
        <title>The transcriptional landscape of the mammalian genome.</title>
        <authorList>
            <person name="Carninci P."/>
            <person name="Kasukawa T."/>
            <person name="Katayama S."/>
            <person name="Gough J."/>
            <person name="Frith M.C."/>
            <person name="Maeda N."/>
            <person name="Oyama R."/>
            <person name="Ravasi T."/>
            <person name="Lenhard B."/>
            <person name="Wells C."/>
            <person name="Kodzius R."/>
            <person name="Shimokawa K."/>
            <person name="Bajic V.B."/>
            <person name="Brenner S.E."/>
            <person name="Batalov S."/>
            <person name="Forrest A.R."/>
            <person name="Zavolan M."/>
            <person name="Davis M.J."/>
            <person name="Wilming L.G."/>
            <person name="Aidinis V."/>
            <person name="Allen J.E."/>
            <person name="Ambesi-Impiombato A."/>
            <person name="Apweiler R."/>
            <person name="Aturaliya R.N."/>
            <person name="Bailey T.L."/>
            <person name="Bansal M."/>
            <person name="Baxter L."/>
            <person name="Beisel K.W."/>
            <person name="Bersano T."/>
            <person name="Bono H."/>
            <person name="Chalk A.M."/>
            <person name="Chiu K.P."/>
            <person name="Choudhary V."/>
            <person name="Christoffels A."/>
            <person name="Clutterbuck D.R."/>
            <person name="Crowe M.L."/>
            <person name="Dalla E."/>
            <person name="Dalrymple B.P."/>
            <person name="de Bono B."/>
            <person name="Della Gatta G."/>
            <person name="di Bernardo D."/>
            <person name="Down T."/>
            <person name="Engstrom P."/>
            <person name="Fagiolini M."/>
            <person name="Faulkner G."/>
            <person name="Fletcher C.F."/>
            <person name="Fukushima T."/>
            <person name="Furuno M."/>
            <person name="Futaki S."/>
            <person name="Gariboldi M."/>
            <person name="Georgii-Hemming P."/>
            <person name="Gingeras T.R."/>
            <person name="Gojobori T."/>
            <person name="Green R.E."/>
            <person name="Gustincich S."/>
            <person name="Harbers M."/>
            <person name="Hayashi Y."/>
            <person name="Hensch T.K."/>
            <person name="Hirokawa N."/>
            <person name="Hill D."/>
            <person name="Huminiecki L."/>
            <person name="Iacono M."/>
            <person name="Ikeo K."/>
            <person name="Iwama A."/>
            <person name="Ishikawa T."/>
            <person name="Jakt M."/>
            <person name="Kanapin A."/>
            <person name="Katoh M."/>
            <person name="Kawasawa Y."/>
            <person name="Kelso J."/>
            <person name="Kitamura H."/>
            <person name="Kitano H."/>
            <person name="Kollias G."/>
            <person name="Krishnan S.P."/>
            <person name="Kruger A."/>
            <person name="Kummerfeld S.K."/>
            <person name="Kurochkin I.V."/>
            <person name="Lareau L.F."/>
            <person name="Lazarevic D."/>
            <person name="Lipovich L."/>
            <person name="Liu J."/>
            <person name="Liuni S."/>
            <person name="McWilliam S."/>
            <person name="Madan Babu M."/>
            <person name="Madera M."/>
            <person name="Marchionni L."/>
            <person name="Matsuda H."/>
            <person name="Matsuzawa S."/>
            <person name="Miki H."/>
            <person name="Mignone F."/>
            <person name="Miyake S."/>
            <person name="Morris K."/>
            <person name="Mottagui-Tabar S."/>
            <person name="Mulder N."/>
            <person name="Nakano N."/>
            <person name="Nakauchi H."/>
            <person name="Ng P."/>
            <person name="Nilsson R."/>
            <person name="Nishiguchi S."/>
            <person name="Nishikawa S."/>
            <person name="Nori F."/>
            <person name="Ohara O."/>
            <person name="Okazaki Y."/>
            <person name="Orlando V."/>
            <person name="Pang K.C."/>
            <person name="Pavan W.J."/>
            <person name="Pavesi G."/>
            <person name="Pesole G."/>
            <person name="Petrovsky N."/>
            <person name="Piazza S."/>
            <person name="Reed J."/>
            <person name="Reid J.F."/>
            <person name="Ring B.Z."/>
            <person name="Ringwald M."/>
            <person name="Rost B."/>
            <person name="Ruan Y."/>
            <person name="Salzberg S.L."/>
            <person name="Sandelin A."/>
            <person name="Schneider C."/>
            <person name="Schoenbach C."/>
            <person name="Sekiguchi K."/>
            <person name="Semple C.A."/>
            <person name="Seno S."/>
            <person name="Sessa L."/>
            <person name="Sheng Y."/>
            <person name="Shibata Y."/>
            <person name="Shimada H."/>
            <person name="Shimada K."/>
            <person name="Silva D."/>
            <person name="Sinclair B."/>
            <person name="Sperling S."/>
            <person name="Stupka E."/>
            <person name="Sugiura K."/>
            <person name="Sultana R."/>
            <person name="Takenaka Y."/>
            <person name="Taki K."/>
            <person name="Tammoja K."/>
            <person name="Tan S.L."/>
            <person name="Tang S."/>
            <person name="Taylor M.S."/>
            <person name="Tegner J."/>
            <person name="Teichmann S.A."/>
            <person name="Ueda H.R."/>
            <person name="van Nimwegen E."/>
            <person name="Verardo R."/>
            <person name="Wei C.L."/>
            <person name="Yagi K."/>
            <person name="Yamanishi H."/>
            <person name="Zabarovsky E."/>
            <person name="Zhu S."/>
            <person name="Zimmer A."/>
            <person name="Hide W."/>
            <person name="Bult C."/>
            <person name="Grimmond S.M."/>
            <person name="Teasdale R.D."/>
            <person name="Liu E.T."/>
            <person name="Brusic V."/>
            <person name="Quackenbush J."/>
            <person name="Wahlestedt C."/>
            <person name="Mattick J.S."/>
            <person name="Hume D.A."/>
            <person name="Kai C."/>
            <person name="Sasaki D."/>
            <person name="Tomaru Y."/>
            <person name="Fukuda S."/>
            <person name="Kanamori-Katayama M."/>
            <person name="Suzuki M."/>
            <person name="Aoki J."/>
            <person name="Arakawa T."/>
            <person name="Iida J."/>
            <person name="Imamura K."/>
            <person name="Itoh M."/>
            <person name="Kato T."/>
            <person name="Kawaji H."/>
            <person name="Kawagashira N."/>
            <person name="Kawashima T."/>
            <person name="Kojima M."/>
            <person name="Kondo S."/>
            <person name="Konno H."/>
            <person name="Nakano K."/>
            <person name="Ninomiya N."/>
            <person name="Nishio T."/>
            <person name="Okada M."/>
            <person name="Plessy C."/>
            <person name="Shibata K."/>
            <person name="Shiraki T."/>
            <person name="Suzuki S."/>
            <person name="Tagami M."/>
            <person name="Waki K."/>
            <person name="Watahiki A."/>
            <person name="Okamura-Oho Y."/>
            <person name="Suzuki H."/>
            <person name="Kawai J."/>
            <person name="Hayashizaki Y."/>
        </authorList>
    </citation>
    <scope>NUCLEOTIDE SEQUENCE [LARGE SCALE MRNA] (ISOFORM 1)</scope>
    <source>
        <strain evidence="10">C57BL/6J</strain>
        <tissue evidence="10">Ovary</tissue>
    </source>
</reference>
<reference evidence="12" key="3">
    <citation type="journal article" date="2009" name="PLoS Biol.">
        <title>Lineage-specific biology revealed by a finished genome assembly of the mouse.</title>
        <authorList>
            <person name="Church D.M."/>
            <person name="Goodstadt L."/>
            <person name="Hillier L.W."/>
            <person name="Zody M.C."/>
            <person name="Goldstein S."/>
            <person name="She X."/>
            <person name="Bult C.J."/>
            <person name="Agarwala R."/>
            <person name="Cherry J.L."/>
            <person name="DiCuccio M."/>
            <person name="Hlavina W."/>
            <person name="Kapustin Y."/>
            <person name="Meric P."/>
            <person name="Maglott D."/>
            <person name="Birtle Z."/>
            <person name="Marques A.C."/>
            <person name="Graves T."/>
            <person name="Zhou S."/>
            <person name="Teague B."/>
            <person name="Potamousis K."/>
            <person name="Churas C."/>
            <person name="Place M."/>
            <person name="Herschleb J."/>
            <person name="Runnheim R."/>
            <person name="Forrest D."/>
            <person name="Amos-Landgraf J."/>
            <person name="Schwartz D.C."/>
            <person name="Cheng Z."/>
            <person name="Lindblad-Toh K."/>
            <person name="Eichler E.E."/>
            <person name="Ponting C.P."/>
        </authorList>
    </citation>
    <scope>NUCLEOTIDE SEQUENCE [LARGE SCALE GENOMIC DNA]</scope>
    <source>
        <strain evidence="12">C57BL/6J</strain>
    </source>
</reference>
<reference evidence="8" key="4">
    <citation type="journal article" date="2004" name="Genome Res.">
        <title>The status, quality, and expansion of the NIH full-length cDNA project: the Mammalian Gene Collection (MGC).</title>
        <authorList>
            <consortium name="The MGC Project Team"/>
        </authorList>
    </citation>
    <scope>NUCLEOTIDE SEQUENCE [LARGE SCALE MRNA] (ISOFORM 2)</scope>
    <source>
        <strain evidence="8">C57BL/6J</strain>
        <tissue evidence="8">Oocyte</tissue>
    </source>
</reference>
<reference evidence="7" key="5">
    <citation type="journal article" date="2013" name="J. Biol. Chem.">
        <title>SCF(Fbxw15) mediates histone acetyltransferase binding to origin recognition complex (HBO1) ubiquitin-proteasomal degradation to regulate cell proliferation.</title>
        <authorList>
            <person name="Zou C."/>
            <person name="Chen Y."/>
            <person name="Smith R.M."/>
            <person name="Snavely C."/>
            <person name="Li J."/>
            <person name="Coon T.A."/>
            <person name="Chen B.B."/>
            <person name="Zhao Y."/>
            <person name="Mallampalli R.K."/>
        </authorList>
    </citation>
    <scope>FUNCTION</scope>
    <scope>PATHWAY</scope>
    <scope>IDENTIFICATION IN AN SCF COMPLEX</scope>
    <scope>INTERACTION WITH KAT7 AND SKP1</scope>
    <scope>SUBCELLULAR LOCATION</scope>
    <scope>INDUCTION</scope>
</reference>
<name>FBW15_MOUSE</name>
<proteinExistence type="evidence at protein level"/>
<evidence type="ECO:0000255" key="1"/>
<evidence type="ECO:0000255" key="2">
    <source>
        <dbReference type="PROSITE-ProRule" id="PRU00080"/>
    </source>
</evidence>
<evidence type="ECO:0000269" key="3">
    <source>
    </source>
</evidence>
<evidence type="ECO:0000269" key="4">
    <source>
    </source>
</evidence>
<evidence type="ECO:0000269" key="5">
    <source>
    </source>
</evidence>
<evidence type="ECO:0000303" key="6">
    <source>
    </source>
</evidence>
<evidence type="ECO:0000305" key="7"/>
<evidence type="ECO:0000312" key="8">
    <source>
        <dbReference type="EMBL" id="AAH99378.1"/>
    </source>
</evidence>
<evidence type="ECO:0000312" key="9">
    <source>
        <dbReference type="EMBL" id="AAY68032.1"/>
    </source>
</evidence>
<evidence type="ECO:0000312" key="10">
    <source>
        <dbReference type="EMBL" id="BAC39962.1"/>
    </source>
</evidence>
<evidence type="ECO:0000312" key="11">
    <source>
        <dbReference type="MGI" id="MGI:3505701"/>
    </source>
</evidence>
<evidence type="ECO:0000312" key="12">
    <source>
        <dbReference type="Proteomes" id="UP000000589"/>
    </source>
</evidence>
<protein>
    <recommendedName>
        <fullName evidence="6">F-box/WD repeat-containing protein 15</fullName>
    </recommendedName>
</protein>
<comment type="function">
    <text evidence="5">Substrate-recognition component of an SCF (SKP1-CUL1-F-box protein)-type E3 ubiquitin ligase complex. Promotes KAT7 ubiquitination and subsequent degradation in collaboration with MAP2K1 kinase, leading to reduced histone H3K14 acetylation and increased cell proliferation.</text>
</comment>
<comment type="pathway">
    <text evidence="5">Protein modification; protein ubiquitination.</text>
</comment>
<comment type="subunit">
    <text evidence="5">Part of an SCF (SKP1-CUL1-F-box protein) E3 ubiquitin-protein ligase complex. Interacts with KAT7 and SKP1.</text>
</comment>
<comment type="subcellular location">
    <subcellularLocation>
        <location evidence="4 5">Cytoplasm</location>
        <location evidence="4 5">Cytosol</location>
    </subcellularLocation>
    <subcellularLocation>
        <location evidence="4">Endoplasmic reticulum</location>
    </subcellularLocation>
    <subcellularLocation>
        <location evidence="5">Nucleus</location>
    </subcellularLocation>
</comment>
<comment type="alternative products">
    <event type="alternative splicing"/>
    <isoform>
        <id>L7N1X6-1</id>
        <name>1</name>
        <sequence type="displayed"/>
    </isoform>
    <isoform>
        <id>L7N1X6-2</id>
        <name>2</name>
        <sequence type="described" ref="VSP_059276"/>
    </isoform>
</comment>
<comment type="tissue specificity">
    <text evidence="4">Specifically expressed in oocytes from follicles of the medullary region of the ovary.</text>
</comment>
<comment type="developmental stage">
    <text evidence="4">Detected at 18 dpc, and then decreases thereafter to a very low level at the day of birth. Detected again at 48 hours postpartum, and then increases at 96 hours until 6 days after birth.</text>
</comment>
<comment type="induction">
    <text evidence="5">Up-regulated in response to bacterial lipopolysaccharides (LPS).</text>
</comment>